<reference key="1">
    <citation type="journal article" date="2004" name="Nucleic Acids Res.">
        <title>Thermoadaptation trait revealed by the genome sequence of thermophilic Geobacillus kaustophilus.</title>
        <authorList>
            <person name="Takami H."/>
            <person name="Takaki Y."/>
            <person name="Chee G.-J."/>
            <person name="Nishi S."/>
            <person name="Shimamura S."/>
            <person name="Suzuki H."/>
            <person name="Matsui S."/>
            <person name="Uchiyama I."/>
        </authorList>
    </citation>
    <scope>NUCLEOTIDE SEQUENCE [LARGE SCALE GENOMIC DNA]</scope>
    <source>
        <strain>HTA426</strain>
    </source>
</reference>
<evidence type="ECO:0000255" key="1">
    <source>
        <dbReference type="HAMAP-Rule" id="MF_00558"/>
    </source>
</evidence>
<gene>
    <name evidence="1" type="primary">sucC</name>
    <name type="ordered locus">GK1208</name>
</gene>
<protein>
    <recommendedName>
        <fullName evidence="1">Succinate--CoA ligase [ADP-forming] subunit beta</fullName>
        <ecNumber evidence="1">6.2.1.5</ecNumber>
    </recommendedName>
    <alternativeName>
        <fullName evidence="1">Succinyl-CoA synthetase subunit beta</fullName>
        <shortName evidence="1">SCS-beta</shortName>
    </alternativeName>
</protein>
<dbReference type="EC" id="6.2.1.5" evidence="1"/>
<dbReference type="EMBL" id="BA000043">
    <property type="protein sequence ID" value="BAD75493.1"/>
    <property type="molecule type" value="Genomic_DNA"/>
</dbReference>
<dbReference type="RefSeq" id="WP_011230708.1">
    <property type="nucleotide sequence ID" value="NC_006510.1"/>
</dbReference>
<dbReference type="SMR" id="Q5L0N7"/>
<dbReference type="STRING" id="235909.GK1208"/>
<dbReference type="GeneID" id="32063102"/>
<dbReference type="KEGG" id="gka:GK1208"/>
<dbReference type="eggNOG" id="COG0045">
    <property type="taxonomic scope" value="Bacteria"/>
</dbReference>
<dbReference type="HOGENOM" id="CLU_037430_0_2_9"/>
<dbReference type="UniPathway" id="UPA00223">
    <property type="reaction ID" value="UER00999"/>
</dbReference>
<dbReference type="Proteomes" id="UP000001172">
    <property type="component" value="Chromosome"/>
</dbReference>
<dbReference type="GO" id="GO:0005829">
    <property type="term" value="C:cytosol"/>
    <property type="evidence" value="ECO:0007669"/>
    <property type="project" value="TreeGrafter"/>
</dbReference>
<dbReference type="GO" id="GO:0042709">
    <property type="term" value="C:succinate-CoA ligase complex"/>
    <property type="evidence" value="ECO:0007669"/>
    <property type="project" value="TreeGrafter"/>
</dbReference>
<dbReference type="GO" id="GO:0005524">
    <property type="term" value="F:ATP binding"/>
    <property type="evidence" value="ECO:0007669"/>
    <property type="project" value="UniProtKB-UniRule"/>
</dbReference>
<dbReference type="GO" id="GO:0000287">
    <property type="term" value="F:magnesium ion binding"/>
    <property type="evidence" value="ECO:0007669"/>
    <property type="project" value="UniProtKB-UniRule"/>
</dbReference>
<dbReference type="GO" id="GO:0004775">
    <property type="term" value="F:succinate-CoA ligase (ADP-forming) activity"/>
    <property type="evidence" value="ECO:0007669"/>
    <property type="project" value="UniProtKB-UniRule"/>
</dbReference>
<dbReference type="GO" id="GO:0004776">
    <property type="term" value="F:succinate-CoA ligase (GDP-forming) activity"/>
    <property type="evidence" value="ECO:0007669"/>
    <property type="project" value="RHEA"/>
</dbReference>
<dbReference type="GO" id="GO:0006104">
    <property type="term" value="P:succinyl-CoA metabolic process"/>
    <property type="evidence" value="ECO:0007669"/>
    <property type="project" value="TreeGrafter"/>
</dbReference>
<dbReference type="GO" id="GO:0006099">
    <property type="term" value="P:tricarboxylic acid cycle"/>
    <property type="evidence" value="ECO:0007669"/>
    <property type="project" value="UniProtKB-UniRule"/>
</dbReference>
<dbReference type="FunFam" id="3.30.1490.20:FF:000002">
    <property type="entry name" value="Succinate--CoA ligase [ADP-forming] subunit beta"/>
    <property type="match status" value="1"/>
</dbReference>
<dbReference type="FunFam" id="3.30.470.20:FF:000002">
    <property type="entry name" value="Succinate--CoA ligase [ADP-forming] subunit beta"/>
    <property type="match status" value="1"/>
</dbReference>
<dbReference type="FunFam" id="3.40.50.261:FF:000001">
    <property type="entry name" value="Succinate--CoA ligase [ADP-forming] subunit beta"/>
    <property type="match status" value="1"/>
</dbReference>
<dbReference type="Gene3D" id="3.30.1490.20">
    <property type="entry name" value="ATP-grasp fold, A domain"/>
    <property type="match status" value="1"/>
</dbReference>
<dbReference type="Gene3D" id="3.30.470.20">
    <property type="entry name" value="ATP-grasp fold, B domain"/>
    <property type="match status" value="1"/>
</dbReference>
<dbReference type="Gene3D" id="3.40.50.261">
    <property type="entry name" value="Succinyl-CoA synthetase domains"/>
    <property type="match status" value="1"/>
</dbReference>
<dbReference type="HAMAP" id="MF_00558">
    <property type="entry name" value="Succ_CoA_beta"/>
    <property type="match status" value="1"/>
</dbReference>
<dbReference type="InterPro" id="IPR011761">
    <property type="entry name" value="ATP-grasp"/>
</dbReference>
<dbReference type="InterPro" id="IPR013650">
    <property type="entry name" value="ATP-grasp_succ-CoA_synth-type"/>
</dbReference>
<dbReference type="InterPro" id="IPR013815">
    <property type="entry name" value="ATP_grasp_subdomain_1"/>
</dbReference>
<dbReference type="InterPro" id="IPR017866">
    <property type="entry name" value="Succ-CoA_synthase_bsu_CS"/>
</dbReference>
<dbReference type="InterPro" id="IPR005811">
    <property type="entry name" value="SUCC_ACL_C"/>
</dbReference>
<dbReference type="InterPro" id="IPR005809">
    <property type="entry name" value="Succ_CoA_ligase-like_bsu"/>
</dbReference>
<dbReference type="InterPro" id="IPR016102">
    <property type="entry name" value="Succinyl-CoA_synth-like"/>
</dbReference>
<dbReference type="NCBIfam" id="NF001913">
    <property type="entry name" value="PRK00696.1"/>
    <property type="match status" value="1"/>
</dbReference>
<dbReference type="NCBIfam" id="TIGR01016">
    <property type="entry name" value="sucCoAbeta"/>
    <property type="match status" value="1"/>
</dbReference>
<dbReference type="PANTHER" id="PTHR11815:SF10">
    <property type="entry name" value="SUCCINATE--COA LIGASE [GDP-FORMING] SUBUNIT BETA, MITOCHONDRIAL"/>
    <property type="match status" value="1"/>
</dbReference>
<dbReference type="PANTHER" id="PTHR11815">
    <property type="entry name" value="SUCCINYL-COA SYNTHETASE BETA CHAIN"/>
    <property type="match status" value="1"/>
</dbReference>
<dbReference type="Pfam" id="PF08442">
    <property type="entry name" value="ATP-grasp_2"/>
    <property type="match status" value="1"/>
</dbReference>
<dbReference type="Pfam" id="PF00549">
    <property type="entry name" value="Ligase_CoA"/>
    <property type="match status" value="1"/>
</dbReference>
<dbReference type="PIRSF" id="PIRSF001554">
    <property type="entry name" value="SucCS_beta"/>
    <property type="match status" value="1"/>
</dbReference>
<dbReference type="SUPFAM" id="SSF56059">
    <property type="entry name" value="Glutathione synthetase ATP-binding domain-like"/>
    <property type="match status" value="1"/>
</dbReference>
<dbReference type="SUPFAM" id="SSF52210">
    <property type="entry name" value="Succinyl-CoA synthetase domains"/>
    <property type="match status" value="1"/>
</dbReference>
<dbReference type="PROSITE" id="PS50975">
    <property type="entry name" value="ATP_GRASP"/>
    <property type="match status" value="1"/>
</dbReference>
<dbReference type="PROSITE" id="PS01217">
    <property type="entry name" value="SUCCINYL_COA_LIG_3"/>
    <property type="match status" value="1"/>
</dbReference>
<proteinExistence type="inferred from homology"/>
<name>SUCC_GEOKA</name>
<accession>Q5L0N7</accession>
<comment type="function">
    <text evidence="1">Succinyl-CoA synthetase functions in the citric acid cycle (TCA), coupling the hydrolysis of succinyl-CoA to the synthesis of either ATP or GTP and thus represents the only step of substrate-level phosphorylation in the TCA. The beta subunit provides nucleotide specificity of the enzyme and binds the substrate succinate, while the binding sites for coenzyme A and phosphate are found in the alpha subunit.</text>
</comment>
<comment type="catalytic activity">
    <reaction evidence="1">
        <text>succinate + ATP + CoA = succinyl-CoA + ADP + phosphate</text>
        <dbReference type="Rhea" id="RHEA:17661"/>
        <dbReference type="ChEBI" id="CHEBI:30031"/>
        <dbReference type="ChEBI" id="CHEBI:30616"/>
        <dbReference type="ChEBI" id="CHEBI:43474"/>
        <dbReference type="ChEBI" id="CHEBI:57287"/>
        <dbReference type="ChEBI" id="CHEBI:57292"/>
        <dbReference type="ChEBI" id="CHEBI:456216"/>
        <dbReference type="EC" id="6.2.1.5"/>
    </reaction>
    <physiologicalReaction direction="right-to-left" evidence="1">
        <dbReference type="Rhea" id="RHEA:17663"/>
    </physiologicalReaction>
</comment>
<comment type="catalytic activity">
    <reaction evidence="1">
        <text>GTP + succinate + CoA = succinyl-CoA + GDP + phosphate</text>
        <dbReference type="Rhea" id="RHEA:22120"/>
        <dbReference type="ChEBI" id="CHEBI:30031"/>
        <dbReference type="ChEBI" id="CHEBI:37565"/>
        <dbReference type="ChEBI" id="CHEBI:43474"/>
        <dbReference type="ChEBI" id="CHEBI:57287"/>
        <dbReference type="ChEBI" id="CHEBI:57292"/>
        <dbReference type="ChEBI" id="CHEBI:58189"/>
    </reaction>
    <physiologicalReaction direction="right-to-left" evidence="1">
        <dbReference type="Rhea" id="RHEA:22122"/>
    </physiologicalReaction>
</comment>
<comment type="cofactor">
    <cofactor evidence="1">
        <name>Mg(2+)</name>
        <dbReference type="ChEBI" id="CHEBI:18420"/>
    </cofactor>
    <text evidence="1">Binds 1 Mg(2+) ion per subunit.</text>
</comment>
<comment type="pathway">
    <text evidence="1">Carbohydrate metabolism; tricarboxylic acid cycle; succinate from succinyl-CoA (ligase route): step 1/1.</text>
</comment>
<comment type="subunit">
    <text evidence="1">Heterotetramer of two alpha and two beta subunits.</text>
</comment>
<comment type="similarity">
    <text evidence="1">Belongs to the succinate/malate CoA ligase beta subunit family.</text>
</comment>
<keyword id="KW-0067">ATP-binding</keyword>
<keyword id="KW-0436">Ligase</keyword>
<keyword id="KW-0460">Magnesium</keyword>
<keyword id="KW-0479">Metal-binding</keyword>
<keyword id="KW-0547">Nucleotide-binding</keyword>
<keyword id="KW-1185">Reference proteome</keyword>
<keyword id="KW-0816">Tricarboxylic acid cycle</keyword>
<feature type="chain" id="PRO_1000061113" description="Succinate--CoA ligase [ADP-forming] subunit beta">
    <location>
        <begin position="1"/>
        <end position="386"/>
    </location>
</feature>
<feature type="domain" description="ATP-grasp" evidence="1">
    <location>
        <begin position="9"/>
        <end position="244"/>
    </location>
</feature>
<feature type="binding site" evidence="1">
    <location>
        <position position="46"/>
    </location>
    <ligand>
        <name>ATP</name>
        <dbReference type="ChEBI" id="CHEBI:30616"/>
    </ligand>
</feature>
<feature type="binding site" evidence="1">
    <location>
        <begin position="53"/>
        <end position="55"/>
    </location>
    <ligand>
        <name>ATP</name>
        <dbReference type="ChEBI" id="CHEBI:30616"/>
    </ligand>
</feature>
<feature type="binding site" evidence="1">
    <location>
        <position position="99"/>
    </location>
    <ligand>
        <name>ATP</name>
        <dbReference type="ChEBI" id="CHEBI:30616"/>
    </ligand>
</feature>
<feature type="binding site" evidence="1">
    <location>
        <position position="102"/>
    </location>
    <ligand>
        <name>ATP</name>
        <dbReference type="ChEBI" id="CHEBI:30616"/>
    </ligand>
</feature>
<feature type="binding site" evidence="1">
    <location>
        <position position="107"/>
    </location>
    <ligand>
        <name>ATP</name>
        <dbReference type="ChEBI" id="CHEBI:30616"/>
    </ligand>
</feature>
<feature type="binding site" evidence="1">
    <location>
        <position position="199"/>
    </location>
    <ligand>
        <name>Mg(2+)</name>
        <dbReference type="ChEBI" id="CHEBI:18420"/>
    </ligand>
</feature>
<feature type="binding site" evidence="1">
    <location>
        <position position="213"/>
    </location>
    <ligand>
        <name>Mg(2+)</name>
        <dbReference type="ChEBI" id="CHEBI:18420"/>
    </ligand>
</feature>
<feature type="binding site" evidence="1">
    <location>
        <position position="264"/>
    </location>
    <ligand>
        <name>substrate</name>
        <note>ligand shared with subunit alpha</note>
    </ligand>
</feature>
<feature type="binding site" evidence="1">
    <location>
        <begin position="321"/>
        <end position="323"/>
    </location>
    <ligand>
        <name>substrate</name>
        <note>ligand shared with subunit alpha</note>
    </ligand>
</feature>
<sequence>MNIHEYQAKEILRSYGVSVPNGRVAFTVDEAVEAAKELGAPVCVVKAQIHAGGRGKAGGVKVAKSLEEVRTYASELLGKVLVTHQTGPEGKEVKRLLIEEGCDIQKEYYIGLVVDRATSRVVLMGSEEGGTEIEEVAAKTPEKIFKEYIDPAVGLQAFQARRLAFNINIPKHLVNQAVKFMMGLYQVFVDKDCSIAEINPLVVTGDGKVMALDAKLNFDSNALYRHPDILEYRDLDEEDPKEVEASKYDLNYIALDGNIGCMVNGAGLAMATMDIIKYYGGEPANFLDVGGGASEEKVREAFKIILSDPNVKGIFVNIFGGIMKCDVIASGIVAATKQVGLTLPLVVRLEGTNVELGKKILQESGLNIIAAESMADGAQKIVELVR</sequence>
<organism>
    <name type="scientific">Geobacillus kaustophilus (strain HTA426)</name>
    <dbReference type="NCBI Taxonomy" id="235909"/>
    <lineage>
        <taxon>Bacteria</taxon>
        <taxon>Bacillati</taxon>
        <taxon>Bacillota</taxon>
        <taxon>Bacilli</taxon>
        <taxon>Bacillales</taxon>
        <taxon>Anoxybacillaceae</taxon>
        <taxon>Geobacillus</taxon>
        <taxon>Geobacillus thermoleovorans group</taxon>
    </lineage>
</organism>